<protein>
    <recommendedName>
        <fullName evidence="6">APETALA2-like protein 1</fullName>
    </recommendedName>
</protein>
<keyword id="KW-0025">Alternative splicing</keyword>
<keyword id="KW-0238">DNA-binding</keyword>
<keyword id="KW-0539">Nucleus</keyword>
<keyword id="KW-1185">Reference proteome</keyword>
<keyword id="KW-0677">Repeat</keyword>
<keyword id="KW-0804">Transcription</keyword>
<keyword id="KW-0805">Transcription regulation</keyword>
<gene>
    <name evidence="6" type="primary">AP2-1</name>
    <name evidence="7" type="ORF">OsI_18248</name>
</gene>
<organism>
    <name type="scientific">Oryza sativa subsp. indica</name>
    <name type="common">Rice</name>
    <dbReference type="NCBI Taxonomy" id="39946"/>
    <lineage>
        <taxon>Eukaryota</taxon>
        <taxon>Viridiplantae</taxon>
        <taxon>Streptophyta</taxon>
        <taxon>Embryophyta</taxon>
        <taxon>Tracheophyta</taxon>
        <taxon>Spermatophyta</taxon>
        <taxon>Magnoliopsida</taxon>
        <taxon>Liliopsida</taxon>
        <taxon>Poales</taxon>
        <taxon>Poaceae</taxon>
        <taxon>BOP clade</taxon>
        <taxon>Oryzoideae</taxon>
        <taxon>Oryzeae</taxon>
        <taxon>Oryzinae</taxon>
        <taxon>Oryza</taxon>
        <taxon>Oryza sativa</taxon>
    </lineage>
</organism>
<name>AP21_ORYSI</name>
<proteinExistence type="evidence at transcript level"/>
<evidence type="ECO:0000250" key="1">
    <source>
        <dbReference type="UniProtKB" id="P47927"/>
    </source>
</evidence>
<evidence type="ECO:0000250" key="2">
    <source>
        <dbReference type="UniProtKB" id="Q2TQ34"/>
    </source>
</evidence>
<evidence type="ECO:0000255" key="3"/>
<evidence type="ECO:0000255" key="4">
    <source>
        <dbReference type="PROSITE-ProRule" id="PRU00366"/>
    </source>
</evidence>
<evidence type="ECO:0000256" key="5">
    <source>
        <dbReference type="SAM" id="MobiDB-lite"/>
    </source>
</evidence>
<evidence type="ECO:0000305" key="6"/>
<evidence type="ECO:0000312" key="7">
    <source>
        <dbReference type="EMBL" id="EEC78421.1"/>
    </source>
</evidence>
<accession>B8AXC3</accession>
<accession>A6N140</accession>
<dbReference type="EMBL" id="CM000130">
    <property type="protein sequence ID" value="EEC78421.1"/>
    <property type="molecule type" value="Genomic_DNA"/>
</dbReference>
<dbReference type="EMBL" id="EF576372">
    <property type="protein sequence ID" value="ABR25960.1"/>
    <property type="molecule type" value="mRNA"/>
</dbReference>
<dbReference type="SMR" id="B8AXC3"/>
<dbReference type="STRING" id="39946.B8AXC3"/>
<dbReference type="EnsemblPlants" id="OsGoSa_05g0001540.01">
    <molecule id="B8AXC3-1"/>
    <property type="protein sequence ID" value="OsGoSa_05g0001540.01"/>
    <property type="gene ID" value="OsGoSa_05g0001540"/>
</dbReference>
<dbReference type="EnsemblPlants" id="OsLima_05g0001570.02">
    <molecule id="B8AXC3-1"/>
    <property type="protein sequence ID" value="OsLima_05g0001570.02"/>
    <property type="gene ID" value="OsLima_05g0001570"/>
</dbReference>
<dbReference type="EnsemblPlants" id="OsLiXu_05g0001550.01">
    <molecule id="B8AXC3-1"/>
    <property type="protein sequence ID" value="OsLiXu_05g0001550.01"/>
    <property type="gene ID" value="OsLiXu_05g0001550"/>
</dbReference>
<dbReference type="EnsemblPlants" id="OsMH63_05G001550_01">
    <molecule id="B8AXC3-1"/>
    <property type="protein sequence ID" value="OsMH63_05G001550_01"/>
    <property type="gene ID" value="OsMH63_05G001550"/>
</dbReference>
<dbReference type="EnsemblPlants" id="OsPr106_05g0001550.01">
    <molecule id="B8AXC3-1"/>
    <property type="protein sequence ID" value="OsPr106_05g0001550.01"/>
    <property type="gene ID" value="OsPr106_05g0001550"/>
</dbReference>
<dbReference type="Gramene" id="OsGoSa_05g0001540.01">
    <molecule id="B8AXC3-1"/>
    <property type="protein sequence ID" value="OsGoSa_05g0001540.01"/>
    <property type="gene ID" value="OsGoSa_05g0001540"/>
</dbReference>
<dbReference type="Gramene" id="OsLima_05g0001570.02">
    <molecule id="B8AXC3-1"/>
    <property type="protein sequence ID" value="OsLima_05g0001570.02"/>
    <property type="gene ID" value="OsLima_05g0001570"/>
</dbReference>
<dbReference type="Gramene" id="OsLiXu_05g0001550.01">
    <molecule id="B8AXC3-1"/>
    <property type="protein sequence ID" value="OsLiXu_05g0001550.01"/>
    <property type="gene ID" value="OsLiXu_05g0001550"/>
</dbReference>
<dbReference type="Gramene" id="OsMH63_05G001550_01">
    <molecule id="B8AXC3-1"/>
    <property type="protein sequence ID" value="OsMH63_05G001550_01"/>
    <property type="gene ID" value="OsMH63_05G001550"/>
</dbReference>
<dbReference type="Gramene" id="OsPr106_05g0001550.01">
    <molecule id="B8AXC3-1"/>
    <property type="protein sequence ID" value="OsPr106_05g0001550.01"/>
    <property type="gene ID" value="OsPr106_05g0001550"/>
</dbReference>
<dbReference type="HOGENOM" id="CLU_035462_0_0_1"/>
<dbReference type="OMA" id="SHSTICH"/>
<dbReference type="OrthoDB" id="207175at2759"/>
<dbReference type="Proteomes" id="UP000007015">
    <property type="component" value="Chromosome 5"/>
</dbReference>
<dbReference type="GO" id="GO:0005634">
    <property type="term" value="C:nucleus"/>
    <property type="evidence" value="ECO:0007669"/>
    <property type="project" value="UniProtKB-SubCell"/>
</dbReference>
<dbReference type="GO" id="GO:0003677">
    <property type="term" value="F:DNA binding"/>
    <property type="evidence" value="ECO:0007669"/>
    <property type="project" value="UniProtKB-KW"/>
</dbReference>
<dbReference type="GO" id="GO:0003700">
    <property type="term" value="F:DNA-binding transcription factor activity"/>
    <property type="evidence" value="ECO:0007669"/>
    <property type="project" value="InterPro"/>
</dbReference>
<dbReference type="CDD" id="cd00018">
    <property type="entry name" value="AP2"/>
    <property type="match status" value="2"/>
</dbReference>
<dbReference type="FunFam" id="3.30.730.10:FF:000002">
    <property type="entry name" value="AP2-like ethylene-responsive transcription factor"/>
    <property type="match status" value="1"/>
</dbReference>
<dbReference type="FunFam" id="3.30.730.10:FF:000004">
    <property type="entry name" value="AP2-like ethylene-responsive transcription factor"/>
    <property type="match status" value="1"/>
</dbReference>
<dbReference type="Gene3D" id="3.30.730.10">
    <property type="entry name" value="AP2/ERF domain"/>
    <property type="match status" value="2"/>
</dbReference>
<dbReference type="InterPro" id="IPR001471">
    <property type="entry name" value="AP2/ERF_dom"/>
</dbReference>
<dbReference type="InterPro" id="IPR036955">
    <property type="entry name" value="AP2/ERF_dom_sf"/>
</dbReference>
<dbReference type="InterPro" id="IPR016177">
    <property type="entry name" value="DNA-bd_dom_sf"/>
</dbReference>
<dbReference type="PANTHER" id="PTHR32467">
    <property type="entry name" value="AP2-LIKE ETHYLENE-RESPONSIVE TRANSCRIPTION FACTOR"/>
    <property type="match status" value="1"/>
</dbReference>
<dbReference type="PANTHER" id="PTHR32467:SF118">
    <property type="entry name" value="ETHYLENE-RESPONSIVE TRANSCRIPTION FACTOR RAP2-7"/>
    <property type="match status" value="1"/>
</dbReference>
<dbReference type="Pfam" id="PF00847">
    <property type="entry name" value="AP2"/>
    <property type="match status" value="2"/>
</dbReference>
<dbReference type="PRINTS" id="PR00367">
    <property type="entry name" value="ETHRSPELEMNT"/>
</dbReference>
<dbReference type="SMART" id="SM00380">
    <property type="entry name" value="AP2"/>
    <property type="match status" value="2"/>
</dbReference>
<dbReference type="SUPFAM" id="SSF54171">
    <property type="entry name" value="DNA-binding domain"/>
    <property type="match status" value="2"/>
</dbReference>
<dbReference type="PROSITE" id="PS51032">
    <property type="entry name" value="AP2_ERF"/>
    <property type="match status" value="2"/>
</dbReference>
<feature type="chain" id="PRO_0000445988" description="APETALA2-like protein 1">
    <location>
        <begin position="1"/>
        <end position="512"/>
    </location>
</feature>
<feature type="DNA-binding region" description="AP2/ERF 1" evidence="4">
    <location>
        <begin position="171"/>
        <end position="227"/>
    </location>
</feature>
<feature type="DNA-binding region" description="AP2/ERF 2" evidence="4">
    <location>
        <begin position="263"/>
        <end position="320"/>
    </location>
</feature>
<feature type="region of interest" description="Disordered" evidence="5">
    <location>
        <begin position="1"/>
        <end position="100"/>
    </location>
</feature>
<feature type="region of interest" description="Disordered" evidence="5">
    <location>
        <begin position="119"/>
        <end position="174"/>
    </location>
</feature>
<feature type="region of interest" description="Disordered" evidence="5">
    <location>
        <begin position="347"/>
        <end position="367"/>
    </location>
</feature>
<feature type="region of interest" description="Disordered" evidence="5">
    <location>
        <begin position="401"/>
        <end position="433"/>
    </location>
</feature>
<feature type="region of interest" description="Disordered" evidence="5">
    <location>
        <begin position="460"/>
        <end position="512"/>
    </location>
</feature>
<feature type="short sequence motif" description="Nuclear localization signal" evidence="3">
    <location>
        <begin position="159"/>
        <end position="168"/>
    </location>
</feature>
<feature type="short sequence motif" description="EAR" evidence="1">
    <location>
        <begin position="341"/>
        <end position="345"/>
    </location>
</feature>
<feature type="compositionally biased region" description="Polar residues" evidence="5">
    <location>
        <begin position="21"/>
        <end position="32"/>
    </location>
</feature>
<feature type="compositionally biased region" description="Low complexity" evidence="5">
    <location>
        <begin position="39"/>
        <end position="50"/>
    </location>
</feature>
<feature type="compositionally biased region" description="Pro residues" evidence="5">
    <location>
        <begin position="51"/>
        <end position="60"/>
    </location>
</feature>
<feature type="compositionally biased region" description="Acidic residues" evidence="5">
    <location>
        <begin position="78"/>
        <end position="88"/>
    </location>
</feature>
<feature type="compositionally biased region" description="Basic and acidic residues" evidence="5">
    <location>
        <begin position="127"/>
        <end position="137"/>
    </location>
</feature>
<feature type="compositionally biased region" description="Pro residues" evidence="5">
    <location>
        <begin position="141"/>
        <end position="154"/>
    </location>
</feature>
<feature type="compositionally biased region" description="Basic and acidic residues" evidence="5">
    <location>
        <begin position="418"/>
        <end position="430"/>
    </location>
</feature>
<feature type="compositionally biased region" description="Low complexity" evidence="5">
    <location>
        <begin position="460"/>
        <end position="492"/>
    </location>
</feature>
<feature type="splice variant" id="VSP_059994" description="In isoform 2.">
    <original>K</original>
    <variation>KASCNS</variation>
    <location>
        <position position="380"/>
    </location>
</feature>
<feature type="sequence conflict" description="In Ref. 2; ABR25960." evidence="6" ref="2">
    <original>S</original>
    <variation>R</variation>
    <location>
        <position position="344"/>
    </location>
</feature>
<comment type="function">
    <text evidence="1 2">Probable transcription factor (By similarity). Involved in spikelet transition. Regulator of starch biosynthesis especially during seed development (e.g. endosperm starch granules); represses the expression of type I starch synthesis genes. Prevents lemma and palea elongation as well as grain growth (By similarity).</text>
</comment>
<comment type="subunit">
    <text evidence="1 2">May form homodimer (By similarity). Interacts with TPR2/ASP1 (By similarity).</text>
</comment>
<comment type="subcellular location">
    <subcellularLocation>
        <location evidence="4">Nucleus</location>
    </subcellularLocation>
</comment>
<comment type="alternative products">
    <event type="alternative splicing"/>
    <isoform>
        <id>B8AXC3-1</id>
        <name>1</name>
        <sequence type="displayed"/>
    </isoform>
    <isoform>
        <id>B8AXC3-2</id>
        <name>2</name>
        <sequence type="described" ref="VSP_059994"/>
    </isoform>
</comment>
<comment type="similarity">
    <text evidence="6">Belongs to the AP2/ERF transcription factor family. AP2 subfamily.</text>
</comment>
<reference key="1">
    <citation type="journal article" date="2005" name="PLoS Biol.">
        <title>The genomes of Oryza sativa: a history of duplications.</title>
        <authorList>
            <person name="Yu J."/>
            <person name="Wang J."/>
            <person name="Lin W."/>
            <person name="Li S."/>
            <person name="Li H."/>
            <person name="Zhou J."/>
            <person name="Ni P."/>
            <person name="Dong W."/>
            <person name="Hu S."/>
            <person name="Zeng C."/>
            <person name="Zhang J."/>
            <person name="Zhang Y."/>
            <person name="Li R."/>
            <person name="Xu Z."/>
            <person name="Li S."/>
            <person name="Li X."/>
            <person name="Zheng H."/>
            <person name="Cong L."/>
            <person name="Lin L."/>
            <person name="Yin J."/>
            <person name="Geng J."/>
            <person name="Li G."/>
            <person name="Shi J."/>
            <person name="Liu J."/>
            <person name="Lv H."/>
            <person name="Li J."/>
            <person name="Wang J."/>
            <person name="Deng Y."/>
            <person name="Ran L."/>
            <person name="Shi X."/>
            <person name="Wang X."/>
            <person name="Wu Q."/>
            <person name="Li C."/>
            <person name="Ren X."/>
            <person name="Wang J."/>
            <person name="Wang X."/>
            <person name="Li D."/>
            <person name="Liu D."/>
            <person name="Zhang X."/>
            <person name="Ji Z."/>
            <person name="Zhao W."/>
            <person name="Sun Y."/>
            <person name="Zhang Z."/>
            <person name="Bao J."/>
            <person name="Han Y."/>
            <person name="Dong L."/>
            <person name="Ji J."/>
            <person name="Chen P."/>
            <person name="Wu S."/>
            <person name="Liu J."/>
            <person name="Xiao Y."/>
            <person name="Bu D."/>
            <person name="Tan J."/>
            <person name="Yang L."/>
            <person name="Ye C."/>
            <person name="Zhang J."/>
            <person name="Xu J."/>
            <person name="Zhou Y."/>
            <person name="Yu Y."/>
            <person name="Zhang B."/>
            <person name="Zhuang S."/>
            <person name="Wei H."/>
            <person name="Liu B."/>
            <person name="Lei M."/>
            <person name="Yu H."/>
            <person name="Li Y."/>
            <person name="Xu H."/>
            <person name="Wei S."/>
            <person name="He X."/>
            <person name="Fang L."/>
            <person name="Zhang Z."/>
            <person name="Zhang Y."/>
            <person name="Huang X."/>
            <person name="Su Z."/>
            <person name="Tong W."/>
            <person name="Li J."/>
            <person name="Tong Z."/>
            <person name="Li S."/>
            <person name="Ye J."/>
            <person name="Wang L."/>
            <person name="Fang L."/>
            <person name="Lei T."/>
            <person name="Chen C.-S."/>
            <person name="Chen H.-C."/>
            <person name="Xu Z."/>
            <person name="Li H."/>
            <person name="Huang H."/>
            <person name="Zhang F."/>
            <person name="Xu H."/>
            <person name="Li N."/>
            <person name="Zhao C."/>
            <person name="Li S."/>
            <person name="Dong L."/>
            <person name="Huang Y."/>
            <person name="Li L."/>
            <person name="Xi Y."/>
            <person name="Qi Q."/>
            <person name="Li W."/>
            <person name="Zhang B."/>
            <person name="Hu W."/>
            <person name="Zhang Y."/>
            <person name="Tian X."/>
            <person name="Jiao Y."/>
            <person name="Liang X."/>
            <person name="Jin J."/>
            <person name="Gao L."/>
            <person name="Zheng W."/>
            <person name="Hao B."/>
            <person name="Liu S.-M."/>
            <person name="Wang W."/>
            <person name="Yuan L."/>
            <person name="Cao M."/>
            <person name="McDermott J."/>
            <person name="Samudrala R."/>
            <person name="Wang J."/>
            <person name="Wong G.K.-S."/>
            <person name="Yang H."/>
        </authorList>
    </citation>
    <scope>NUCLEOTIDE SEQUENCE [LARGE SCALE GENOMIC DNA]</scope>
    <source>
        <strain>cv. 93-11</strain>
    </source>
</reference>
<reference key="2">
    <citation type="submission" date="2007-04" db="EMBL/GenBank/DDBJ databases">
        <title>A comparative transcriptome map of early and late salinity stress responses in contrasting genotypes of Oryza sativa L.</title>
        <authorList>
            <person name="Kumari S."/>
            <person name="Panjabi V."/>
            <person name="Singla-Pareek S.L."/>
            <person name="Sopory S.K."/>
            <person name="Pareek A."/>
        </authorList>
    </citation>
    <scope>NUCLEOTIDE SEQUENCE [MRNA] OF 341-512 (ISOFORM 1)</scope>
    <source>
        <tissue>Shoot</tissue>
    </source>
</reference>
<sequence length="512" mass="55567">MELDLNNVAEGVVEKHETAARSDSGTSESSVLNGEASGAATTPAEEGSSSTPPPPPPPPAAVLEFSILRSSASASGENDADDDEEEEATPSPPPHHQHQQLLVTRELFPSAAPSPQHWAELGFLRPDPPRPHPDIRILAHAPPPAPPPPPPQPQPQAAKKSRRGPRSRSSQYRGVTFYRRTGRWESHIWDCGKQVYLGGFDTAHAAARAYDRAAIKFRGVEADINFNLSDYEEDMRQMKSLSKEEFVHVLRRQSTGFSRGSSKYRGVTLHKCGRWEARMGQFLGKKYIYLGLFDSEVEAARAYDKAAIKCNGREAVTNFEPSTYDGELPTDAAAQGADVDLNLSISQPAASQQSPKRDSGSLGLQIHHGSFEGSEFKRAKNDAAPSELASRPHRFPLLTEHPPIWTAQPHPLFPNNEDASRSSDQKRKPSEGVAVPSWAWKQVSHHHPAPPHTLPLPFFSSSSSSPSSSSAAASSGFSKAATTAAAAQHTATLRFDPTAPSSSSSSRHHHHH</sequence>